<gene>
    <name type="primary">Got1l1</name>
</gene>
<comment type="catalytic activity">
    <reaction>
        <text>L-aspartate + 2-oxoglutarate = oxaloacetate + L-glutamate</text>
        <dbReference type="Rhea" id="RHEA:21824"/>
        <dbReference type="ChEBI" id="CHEBI:16452"/>
        <dbReference type="ChEBI" id="CHEBI:16810"/>
        <dbReference type="ChEBI" id="CHEBI:29985"/>
        <dbReference type="ChEBI" id="CHEBI:29991"/>
        <dbReference type="EC" id="2.6.1.1"/>
    </reaction>
</comment>
<comment type="cofactor">
    <cofactor evidence="1">
        <name>pyridoxal 5'-phosphate</name>
        <dbReference type="ChEBI" id="CHEBI:597326"/>
    </cofactor>
</comment>
<comment type="subunit">
    <text evidence="1">Homodimer.</text>
</comment>
<comment type="subcellular location">
    <subcellularLocation>
        <location evidence="1">Cytoplasm</location>
    </subcellularLocation>
</comment>
<comment type="alternative products">
    <event type="alternative splicing"/>
    <isoform>
        <id>Q7TSV6-1</id>
        <name>1</name>
        <sequence type="displayed"/>
    </isoform>
    <isoform>
        <id>Q7TSV6-2</id>
        <name>2</name>
        <sequence type="described" ref="VSP_033430"/>
    </isoform>
</comment>
<comment type="miscellaneous">
    <text>In eukaryotes there are cytoplasmic, mitochondrial and chloroplastic isozymes.</text>
</comment>
<comment type="similarity">
    <text evidence="3">Belongs to the class-I pyridoxal-phosphate-dependent aminotransferase family.</text>
</comment>
<comment type="caution">
    <text evidence="3">The residues that bind the substrate in other aspartate aminotransferases are not conserved.</text>
</comment>
<dbReference type="EC" id="2.6.1.1"/>
<dbReference type="EMBL" id="AK006984">
    <property type="protein sequence ID" value="BAB24820.1"/>
    <property type="molecule type" value="mRNA"/>
</dbReference>
<dbReference type="EMBL" id="BC052754">
    <property type="protein sequence ID" value="AAH52754.1"/>
    <property type="molecule type" value="mRNA"/>
</dbReference>
<dbReference type="CCDS" id="CCDS22212.1">
    <molecule id="Q7TSV6-1"/>
</dbReference>
<dbReference type="RefSeq" id="NP_083950.1">
    <molecule id="Q7TSV6-1"/>
    <property type="nucleotide sequence ID" value="NM_029674.1"/>
</dbReference>
<dbReference type="RefSeq" id="XP_006509274.1">
    <molecule id="Q7TSV6-1"/>
    <property type="nucleotide sequence ID" value="XM_006509211.5"/>
</dbReference>
<dbReference type="SMR" id="Q7TSV6"/>
<dbReference type="FunCoup" id="Q7TSV6">
    <property type="interactions" value="393"/>
</dbReference>
<dbReference type="STRING" id="10090.ENSMUSP00000041337"/>
<dbReference type="PaxDb" id="10090-ENSMUSP00000041337"/>
<dbReference type="ProteomicsDB" id="285699">
    <molecule id="Q7TSV6-1"/>
</dbReference>
<dbReference type="Antibodypedia" id="23475">
    <property type="antibodies" value="77 antibodies from 18 providers"/>
</dbReference>
<dbReference type="DNASU" id="76615"/>
<dbReference type="Ensembl" id="ENSMUST00000038174.8">
    <molecule id="Q7TSV6-1"/>
    <property type="protein sequence ID" value="ENSMUSP00000041337.7"/>
    <property type="gene ID" value="ENSMUSG00000039720.8"/>
</dbReference>
<dbReference type="GeneID" id="76615"/>
<dbReference type="KEGG" id="mmu:76615"/>
<dbReference type="UCSC" id="uc009lic.1">
    <molecule id="Q7TSV6-1"/>
    <property type="organism name" value="mouse"/>
</dbReference>
<dbReference type="UCSC" id="uc009lid.1">
    <molecule id="Q7TSV6-2"/>
    <property type="organism name" value="mouse"/>
</dbReference>
<dbReference type="AGR" id="MGI:1923865"/>
<dbReference type="CTD" id="137362"/>
<dbReference type="MGI" id="MGI:1923865">
    <property type="gene designation" value="Got1l1"/>
</dbReference>
<dbReference type="VEuPathDB" id="HostDB:ENSMUSG00000039720"/>
<dbReference type="eggNOG" id="KOG1412">
    <property type="taxonomic scope" value="Eukaryota"/>
</dbReference>
<dbReference type="GeneTree" id="ENSGT00950000183082"/>
<dbReference type="HOGENOM" id="CLU_032440_1_2_1"/>
<dbReference type="InParanoid" id="Q7TSV6"/>
<dbReference type="OMA" id="MSMIKSK"/>
<dbReference type="OrthoDB" id="6752799at2759"/>
<dbReference type="PhylomeDB" id="Q7TSV6"/>
<dbReference type="TreeFam" id="TF314089"/>
<dbReference type="BRENDA" id="5.1.1.13">
    <property type="organism ID" value="3474"/>
</dbReference>
<dbReference type="BioGRID-ORCS" id="76615">
    <property type="hits" value="0 hits in 77 CRISPR screens"/>
</dbReference>
<dbReference type="ChiTaRS" id="Got1l1">
    <property type="organism name" value="mouse"/>
</dbReference>
<dbReference type="PRO" id="PR:Q7TSV6"/>
<dbReference type="Proteomes" id="UP000000589">
    <property type="component" value="Chromosome 8"/>
</dbReference>
<dbReference type="RNAct" id="Q7TSV6">
    <property type="molecule type" value="protein"/>
</dbReference>
<dbReference type="Bgee" id="ENSMUSG00000039720">
    <property type="expression patterns" value="Expressed in spermatid and 164 other cell types or tissues"/>
</dbReference>
<dbReference type="ExpressionAtlas" id="Q7TSV6">
    <property type="expression patterns" value="baseline and differential"/>
</dbReference>
<dbReference type="GO" id="GO:0005737">
    <property type="term" value="C:cytoplasm"/>
    <property type="evidence" value="ECO:0007669"/>
    <property type="project" value="UniProtKB-SubCell"/>
</dbReference>
<dbReference type="GO" id="GO:0004069">
    <property type="term" value="F:L-aspartate:2-oxoglutarate aminotransferase activity"/>
    <property type="evidence" value="ECO:0007669"/>
    <property type="project" value="UniProtKB-EC"/>
</dbReference>
<dbReference type="GO" id="GO:0030170">
    <property type="term" value="F:pyridoxal phosphate binding"/>
    <property type="evidence" value="ECO:0007669"/>
    <property type="project" value="InterPro"/>
</dbReference>
<dbReference type="GO" id="GO:0006520">
    <property type="term" value="P:amino acid metabolic process"/>
    <property type="evidence" value="ECO:0007669"/>
    <property type="project" value="InterPro"/>
</dbReference>
<dbReference type="GO" id="GO:0009058">
    <property type="term" value="P:biosynthetic process"/>
    <property type="evidence" value="ECO:0007669"/>
    <property type="project" value="InterPro"/>
</dbReference>
<dbReference type="FunFam" id="3.40.640.10:FF:000098">
    <property type="entry name" value="Glutamic-oxaloacetic transaminase 1 like 1"/>
    <property type="match status" value="1"/>
</dbReference>
<dbReference type="Gene3D" id="3.90.1150.10">
    <property type="entry name" value="Aspartate Aminotransferase, domain 1"/>
    <property type="match status" value="1"/>
</dbReference>
<dbReference type="Gene3D" id="3.40.640.10">
    <property type="entry name" value="Type I PLP-dependent aspartate aminotransferase-like (Major domain)"/>
    <property type="match status" value="1"/>
</dbReference>
<dbReference type="InterPro" id="IPR004839">
    <property type="entry name" value="Aminotransferase_I/II_large"/>
</dbReference>
<dbReference type="InterPro" id="IPR000796">
    <property type="entry name" value="Asp_trans"/>
</dbReference>
<dbReference type="InterPro" id="IPR015424">
    <property type="entry name" value="PyrdxlP-dep_Trfase"/>
</dbReference>
<dbReference type="InterPro" id="IPR015421">
    <property type="entry name" value="PyrdxlP-dep_Trfase_major"/>
</dbReference>
<dbReference type="InterPro" id="IPR015422">
    <property type="entry name" value="PyrdxlP-dep_Trfase_small"/>
</dbReference>
<dbReference type="PANTHER" id="PTHR11879">
    <property type="entry name" value="ASPARTATE AMINOTRANSFERASE"/>
    <property type="match status" value="1"/>
</dbReference>
<dbReference type="PANTHER" id="PTHR11879:SF6">
    <property type="entry name" value="ASPARTATE AMINOTRANSFERASE, CYTOPLASMIC 2-RELATED"/>
    <property type="match status" value="1"/>
</dbReference>
<dbReference type="Pfam" id="PF00155">
    <property type="entry name" value="Aminotran_1_2"/>
    <property type="match status" value="1"/>
</dbReference>
<dbReference type="PRINTS" id="PR00799">
    <property type="entry name" value="TRANSAMINASE"/>
</dbReference>
<dbReference type="SUPFAM" id="SSF53383">
    <property type="entry name" value="PLP-dependent transferases"/>
    <property type="match status" value="1"/>
</dbReference>
<protein>
    <recommendedName>
        <fullName>Putative aspartate aminotransferase, cytoplasmic 2</fullName>
        <ecNumber>2.6.1.1</ecNumber>
    </recommendedName>
    <alternativeName>
        <fullName>Glutamate oxaloacetate transaminase 1-like protein 1</fullName>
    </alternativeName>
    <alternativeName>
        <fullName>Transaminase A-like protein 1</fullName>
    </alternativeName>
</protein>
<proteinExistence type="evidence at transcript level"/>
<feature type="chain" id="PRO_0000333000" description="Putative aspartate aminotransferase, cytoplasmic 2">
    <location>
        <begin position="1"/>
        <end position="404"/>
    </location>
</feature>
<feature type="modified residue" description="N6-(pyridoxal phosphate)lysine" evidence="1">
    <location>
        <position position="249"/>
    </location>
</feature>
<feature type="splice variant" id="VSP_033430" description="In isoform 2." evidence="2">
    <original>DEGVGILVVAALSNQHLLCVLSQLMDYVQALWGNPPATGARIITSILCNPALFGEWKQSLKGVVENMMLIKEKVKEKLRLLGTPGSWDHITRQSGTHGYLGLTYQQVEFLVKKKHIYLPKTSRINFTCINARNIDYITQSIHEAVMLTEG</original>
    <variation>GLLWVEGREK</variation>
    <location>
        <begin position="255"/>
        <end position="404"/>
    </location>
</feature>
<name>AATC2_MOUSE</name>
<evidence type="ECO:0000250" key="1"/>
<evidence type="ECO:0000303" key="2">
    <source>
    </source>
</evidence>
<evidence type="ECO:0000305" key="3"/>
<sequence length="404" mass="45458">MTSLSVFRDVPTAQKLEGSLLKIYRQDGYPSKLFLAYKVCMTEEGHPWVSLVVHKTRLQIAEDPSLDYEYLPLVGLKSFIQSSLELLFGKHSEAIAEKRVGGVHIVGESGAFQLGAQFLKTWRKNVKIVCIVSCQKEQCGLIFQDMGFIVYEYSIWNASDLCSDPSMFVEVLQHIPVGSILVIGNITDCKFTQNQWTKLMSIIKSKQIFPFFDIPCQGLSTGDLEEDTKILQYFVSLGLEFFCSQSLSKNFGIYDEGVGILVVAALSNQHLLCVLSQLMDYVQALWGNPPATGARIITSILCNPALFGEWKQSLKGVVENMMLIKEKVKEKLRLLGTPGSWDHITRQSGTHGYLGLTYQQVEFLVKKKHIYLPKTSRINFTCINARNIDYITQSIHEAVMLTEG</sequence>
<organism>
    <name type="scientific">Mus musculus</name>
    <name type="common">Mouse</name>
    <dbReference type="NCBI Taxonomy" id="10090"/>
    <lineage>
        <taxon>Eukaryota</taxon>
        <taxon>Metazoa</taxon>
        <taxon>Chordata</taxon>
        <taxon>Craniata</taxon>
        <taxon>Vertebrata</taxon>
        <taxon>Euteleostomi</taxon>
        <taxon>Mammalia</taxon>
        <taxon>Eutheria</taxon>
        <taxon>Euarchontoglires</taxon>
        <taxon>Glires</taxon>
        <taxon>Rodentia</taxon>
        <taxon>Myomorpha</taxon>
        <taxon>Muroidea</taxon>
        <taxon>Muridae</taxon>
        <taxon>Murinae</taxon>
        <taxon>Mus</taxon>
        <taxon>Mus</taxon>
    </lineage>
</organism>
<keyword id="KW-0025">Alternative splicing</keyword>
<keyword id="KW-0032">Aminotransferase</keyword>
<keyword id="KW-0963">Cytoplasm</keyword>
<keyword id="KW-0663">Pyridoxal phosphate</keyword>
<keyword id="KW-1185">Reference proteome</keyword>
<keyword id="KW-0808">Transferase</keyword>
<accession>Q7TSV6</accession>
<accession>Q9D9F3</accession>
<reference key="1">
    <citation type="journal article" date="2005" name="Science">
        <title>The transcriptional landscape of the mammalian genome.</title>
        <authorList>
            <person name="Carninci P."/>
            <person name="Kasukawa T."/>
            <person name="Katayama S."/>
            <person name="Gough J."/>
            <person name="Frith M.C."/>
            <person name="Maeda N."/>
            <person name="Oyama R."/>
            <person name="Ravasi T."/>
            <person name="Lenhard B."/>
            <person name="Wells C."/>
            <person name="Kodzius R."/>
            <person name="Shimokawa K."/>
            <person name="Bajic V.B."/>
            <person name="Brenner S.E."/>
            <person name="Batalov S."/>
            <person name="Forrest A.R."/>
            <person name="Zavolan M."/>
            <person name="Davis M.J."/>
            <person name="Wilming L.G."/>
            <person name="Aidinis V."/>
            <person name="Allen J.E."/>
            <person name="Ambesi-Impiombato A."/>
            <person name="Apweiler R."/>
            <person name="Aturaliya R.N."/>
            <person name="Bailey T.L."/>
            <person name="Bansal M."/>
            <person name="Baxter L."/>
            <person name="Beisel K.W."/>
            <person name="Bersano T."/>
            <person name="Bono H."/>
            <person name="Chalk A.M."/>
            <person name="Chiu K.P."/>
            <person name="Choudhary V."/>
            <person name="Christoffels A."/>
            <person name="Clutterbuck D.R."/>
            <person name="Crowe M.L."/>
            <person name="Dalla E."/>
            <person name="Dalrymple B.P."/>
            <person name="de Bono B."/>
            <person name="Della Gatta G."/>
            <person name="di Bernardo D."/>
            <person name="Down T."/>
            <person name="Engstrom P."/>
            <person name="Fagiolini M."/>
            <person name="Faulkner G."/>
            <person name="Fletcher C.F."/>
            <person name="Fukushima T."/>
            <person name="Furuno M."/>
            <person name="Futaki S."/>
            <person name="Gariboldi M."/>
            <person name="Georgii-Hemming P."/>
            <person name="Gingeras T.R."/>
            <person name="Gojobori T."/>
            <person name="Green R.E."/>
            <person name="Gustincich S."/>
            <person name="Harbers M."/>
            <person name="Hayashi Y."/>
            <person name="Hensch T.K."/>
            <person name="Hirokawa N."/>
            <person name="Hill D."/>
            <person name="Huminiecki L."/>
            <person name="Iacono M."/>
            <person name="Ikeo K."/>
            <person name="Iwama A."/>
            <person name="Ishikawa T."/>
            <person name="Jakt M."/>
            <person name="Kanapin A."/>
            <person name="Katoh M."/>
            <person name="Kawasawa Y."/>
            <person name="Kelso J."/>
            <person name="Kitamura H."/>
            <person name="Kitano H."/>
            <person name="Kollias G."/>
            <person name="Krishnan S.P."/>
            <person name="Kruger A."/>
            <person name="Kummerfeld S.K."/>
            <person name="Kurochkin I.V."/>
            <person name="Lareau L.F."/>
            <person name="Lazarevic D."/>
            <person name="Lipovich L."/>
            <person name="Liu J."/>
            <person name="Liuni S."/>
            <person name="McWilliam S."/>
            <person name="Madan Babu M."/>
            <person name="Madera M."/>
            <person name="Marchionni L."/>
            <person name="Matsuda H."/>
            <person name="Matsuzawa S."/>
            <person name="Miki H."/>
            <person name="Mignone F."/>
            <person name="Miyake S."/>
            <person name="Morris K."/>
            <person name="Mottagui-Tabar S."/>
            <person name="Mulder N."/>
            <person name="Nakano N."/>
            <person name="Nakauchi H."/>
            <person name="Ng P."/>
            <person name="Nilsson R."/>
            <person name="Nishiguchi S."/>
            <person name="Nishikawa S."/>
            <person name="Nori F."/>
            <person name="Ohara O."/>
            <person name="Okazaki Y."/>
            <person name="Orlando V."/>
            <person name="Pang K.C."/>
            <person name="Pavan W.J."/>
            <person name="Pavesi G."/>
            <person name="Pesole G."/>
            <person name="Petrovsky N."/>
            <person name="Piazza S."/>
            <person name="Reed J."/>
            <person name="Reid J.F."/>
            <person name="Ring B.Z."/>
            <person name="Ringwald M."/>
            <person name="Rost B."/>
            <person name="Ruan Y."/>
            <person name="Salzberg S.L."/>
            <person name="Sandelin A."/>
            <person name="Schneider C."/>
            <person name="Schoenbach C."/>
            <person name="Sekiguchi K."/>
            <person name="Semple C.A."/>
            <person name="Seno S."/>
            <person name="Sessa L."/>
            <person name="Sheng Y."/>
            <person name="Shibata Y."/>
            <person name="Shimada H."/>
            <person name="Shimada K."/>
            <person name="Silva D."/>
            <person name="Sinclair B."/>
            <person name="Sperling S."/>
            <person name="Stupka E."/>
            <person name="Sugiura K."/>
            <person name="Sultana R."/>
            <person name="Takenaka Y."/>
            <person name="Taki K."/>
            <person name="Tammoja K."/>
            <person name="Tan S.L."/>
            <person name="Tang S."/>
            <person name="Taylor M.S."/>
            <person name="Tegner J."/>
            <person name="Teichmann S.A."/>
            <person name="Ueda H.R."/>
            <person name="van Nimwegen E."/>
            <person name="Verardo R."/>
            <person name="Wei C.L."/>
            <person name="Yagi K."/>
            <person name="Yamanishi H."/>
            <person name="Zabarovsky E."/>
            <person name="Zhu S."/>
            <person name="Zimmer A."/>
            <person name="Hide W."/>
            <person name="Bult C."/>
            <person name="Grimmond S.M."/>
            <person name="Teasdale R.D."/>
            <person name="Liu E.T."/>
            <person name="Brusic V."/>
            <person name="Quackenbush J."/>
            <person name="Wahlestedt C."/>
            <person name="Mattick J.S."/>
            <person name="Hume D.A."/>
            <person name="Kai C."/>
            <person name="Sasaki D."/>
            <person name="Tomaru Y."/>
            <person name="Fukuda S."/>
            <person name="Kanamori-Katayama M."/>
            <person name="Suzuki M."/>
            <person name="Aoki J."/>
            <person name="Arakawa T."/>
            <person name="Iida J."/>
            <person name="Imamura K."/>
            <person name="Itoh M."/>
            <person name="Kato T."/>
            <person name="Kawaji H."/>
            <person name="Kawagashira N."/>
            <person name="Kawashima T."/>
            <person name="Kojima M."/>
            <person name="Kondo S."/>
            <person name="Konno H."/>
            <person name="Nakano K."/>
            <person name="Ninomiya N."/>
            <person name="Nishio T."/>
            <person name="Okada M."/>
            <person name="Plessy C."/>
            <person name="Shibata K."/>
            <person name="Shiraki T."/>
            <person name="Suzuki S."/>
            <person name="Tagami M."/>
            <person name="Waki K."/>
            <person name="Watahiki A."/>
            <person name="Okamura-Oho Y."/>
            <person name="Suzuki H."/>
            <person name="Kawai J."/>
            <person name="Hayashizaki Y."/>
        </authorList>
    </citation>
    <scope>NUCLEOTIDE SEQUENCE [LARGE SCALE MRNA] (ISOFORM 2)</scope>
    <source>
        <strain>C57BL/6J</strain>
        <tissue>Testis</tissue>
    </source>
</reference>
<reference key="2">
    <citation type="journal article" date="2004" name="Genome Res.">
        <title>The status, quality, and expansion of the NIH full-length cDNA project: the Mammalian Gene Collection (MGC).</title>
        <authorList>
            <consortium name="The MGC Project Team"/>
        </authorList>
    </citation>
    <scope>NUCLEOTIDE SEQUENCE [LARGE SCALE MRNA] (ISOFORM 1)</scope>
    <source>
        <tissue>Brain</tissue>
    </source>
</reference>